<sequence length="100" mass="11852">MAKKSIIHRDKKRENLVKKYQEIRNSIKENIKQAKSLNEKWELQKQLQALPRNSSPTRIHRRCFVTGRPRAVYRDFGLSRHVIREMAHSCLLPGVTKSSW</sequence>
<gene>
    <name evidence="1" type="primary">rps14</name>
</gene>
<evidence type="ECO:0000255" key="1">
    <source>
        <dbReference type="HAMAP-Rule" id="MF_00537"/>
    </source>
</evidence>
<evidence type="ECO:0000305" key="2"/>
<name>RR14_CHAGL</name>
<reference key="1">
    <citation type="journal article" date="2002" name="Proc. Natl. Acad. Sci. U.S.A.">
        <title>The chloroplast and mitochondrial genome sequences of the charophyte Chaetosphaeridium globosum: insights into the timing of the events that restructured organelle DNAs within the green algal lineage that led to land plants.</title>
        <authorList>
            <person name="Turmel M."/>
            <person name="Otis C."/>
            <person name="Lemieux C."/>
        </authorList>
    </citation>
    <scope>NUCLEOTIDE SEQUENCE [LARGE SCALE GENOMIC DNA]</scope>
    <source>
        <strain>M1311</strain>
    </source>
</reference>
<keyword id="KW-0150">Chloroplast</keyword>
<keyword id="KW-0934">Plastid</keyword>
<keyword id="KW-0687">Ribonucleoprotein</keyword>
<keyword id="KW-0689">Ribosomal protein</keyword>
<keyword id="KW-0694">RNA-binding</keyword>
<keyword id="KW-0699">rRNA-binding</keyword>
<feature type="chain" id="PRO_0000276669" description="Small ribosomal subunit protein uS14c">
    <location>
        <begin position="1"/>
        <end position="100"/>
    </location>
</feature>
<proteinExistence type="inferred from homology"/>
<geneLocation type="chloroplast"/>
<accession>Q8M9Y2</accession>
<organism>
    <name type="scientific">Chaetosphaeridium globosum</name>
    <name type="common">Charophycean green alga</name>
    <name type="synonym">Herposteiron globosum</name>
    <dbReference type="NCBI Taxonomy" id="96477"/>
    <lineage>
        <taxon>Eukaryota</taxon>
        <taxon>Viridiplantae</taxon>
        <taxon>Streptophyta</taxon>
        <taxon>Coleochaetophyceae</taxon>
        <taxon>Coleochaetales</taxon>
        <taxon>Chaetosphaeridiaceae</taxon>
        <taxon>Chaetosphaeridium</taxon>
    </lineage>
</organism>
<dbReference type="EMBL" id="AF494278">
    <property type="protein sequence ID" value="AAM96570.1"/>
    <property type="molecule type" value="Genomic_DNA"/>
</dbReference>
<dbReference type="RefSeq" id="NP_683804.1">
    <property type="nucleotide sequence ID" value="NC_004115.1"/>
</dbReference>
<dbReference type="SMR" id="Q8M9Y2"/>
<dbReference type="GeneID" id="860726"/>
<dbReference type="GO" id="GO:0009507">
    <property type="term" value="C:chloroplast"/>
    <property type="evidence" value="ECO:0007669"/>
    <property type="project" value="UniProtKB-SubCell"/>
</dbReference>
<dbReference type="GO" id="GO:0015935">
    <property type="term" value="C:small ribosomal subunit"/>
    <property type="evidence" value="ECO:0007669"/>
    <property type="project" value="TreeGrafter"/>
</dbReference>
<dbReference type="GO" id="GO:0019843">
    <property type="term" value="F:rRNA binding"/>
    <property type="evidence" value="ECO:0007669"/>
    <property type="project" value="UniProtKB-UniRule"/>
</dbReference>
<dbReference type="GO" id="GO:0003735">
    <property type="term" value="F:structural constituent of ribosome"/>
    <property type="evidence" value="ECO:0007669"/>
    <property type="project" value="InterPro"/>
</dbReference>
<dbReference type="GO" id="GO:0006412">
    <property type="term" value="P:translation"/>
    <property type="evidence" value="ECO:0007669"/>
    <property type="project" value="UniProtKB-UniRule"/>
</dbReference>
<dbReference type="FunFam" id="1.10.287.1480:FF:000001">
    <property type="entry name" value="30S ribosomal protein S14"/>
    <property type="match status" value="1"/>
</dbReference>
<dbReference type="Gene3D" id="1.10.287.1480">
    <property type="match status" value="1"/>
</dbReference>
<dbReference type="HAMAP" id="MF_00537">
    <property type="entry name" value="Ribosomal_uS14_1"/>
    <property type="match status" value="1"/>
</dbReference>
<dbReference type="InterPro" id="IPR001209">
    <property type="entry name" value="Ribosomal_uS14"/>
</dbReference>
<dbReference type="InterPro" id="IPR023036">
    <property type="entry name" value="Ribosomal_uS14_bac/plastid"/>
</dbReference>
<dbReference type="InterPro" id="IPR018271">
    <property type="entry name" value="Ribosomal_uS14_CS"/>
</dbReference>
<dbReference type="NCBIfam" id="NF006477">
    <property type="entry name" value="PRK08881.1"/>
    <property type="match status" value="1"/>
</dbReference>
<dbReference type="PANTHER" id="PTHR19836">
    <property type="entry name" value="30S RIBOSOMAL PROTEIN S14"/>
    <property type="match status" value="1"/>
</dbReference>
<dbReference type="PANTHER" id="PTHR19836:SF19">
    <property type="entry name" value="SMALL RIBOSOMAL SUBUNIT PROTEIN US14M"/>
    <property type="match status" value="1"/>
</dbReference>
<dbReference type="Pfam" id="PF00253">
    <property type="entry name" value="Ribosomal_S14"/>
    <property type="match status" value="1"/>
</dbReference>
<dbReference type="SUPFAM" id="SSF57716">
    <property type="entry name" value="Glucocorticoid receptor-like (DNA-binding domain)"/>
    <property type="match status" value="1"/>
</dbReference>
<dbReference type="PROSITE" id="PS00527">
    <property type="entry name" value="RIBOSOMAL_S14"/>
    <property type="match status" value="1"/>
</dbReference>
<comment type="function">
    <text evidence="1">Binds 16S rRNA, required for the assembly of 30S particles.</text>
</comment>
<comment type="subunit">
    <text evidence="1">Part of the 30S ribosomal subunit.</text>
</comment>
<comment type="subcellular location">
    <subcellularLocation>
        <location>Plastid</location>
        <location>Chloroplast</location>
    </subcellularLocation>
</comment>
<comment type="similarity">
    <text evidence="1">Belongs to the universal ribosomal protein uS14 family.</text>
</comment>
<protein>
    <recommendedName>
        <fullName evidence="1">Small ribosomal subunit protein uS14c</fullName>
    </recommendedName>
    <alternativeName>
        <fullName evidence="2">30S ribosomal protein S14, chloroplastic</fullName>
    </alternativeName>
</protein>